<name>TOP6B_SULTO</name>
<sequence>MSSEKFTSISPAEFFKRNPELAGFSNPARALYQTVRELVENALDATDVHNILPSIKIIIELVDPQKQIYKVNVEDNGIGIPPHIVPNAFGKVLYSSKYVLRQTRGMYGLGVKAAVLYSQMYQERPVEVVTSPINSKRIYFFKLKIDVVKNEPIILQKTSVVNEKNWHGTSVTLYLYADWQRAKQKIYEYVKKTYIISPYAEFFFKDPDNNVIYYKRLTDKIPEPPKEVKPHPYGVDIELIKFMIVKKDKPVPVRDFLINEFQSIGDVTADKILEMAKLPKDKKTTELTDEEISRLVEVMKKFDDFRPPSAEALSVIGEDLIKLGLKSIFNPEFAEAITRKPKAYQGHPFIVEAGIAYGGAIQPSPEPIVLRYANKIPLIYDEKSDVIWKVVTEEMDWKRYGIEEEQPPLVVMVHLCSTKVPYRSAGKESIADVEEIEKEIKLALMDVARKLKKYITEKRKEEEAKKRLITYLKYIPEVSRGLALFLVGGDKQKIGDAYSDLREKLLKIALNKLEVNDKKLEEEIRNYKVEEL</sequence>
<dbReference type="EC" id="5.6.2.2" evidence="1"/>
<dbReference type="EMBL" id="BA000023">
    <property type="protein sequence ID" value="BAB66338.1"/>
    <property type="molecule type" value="Genomic_DNA"/>
</dbReference>
<dbReference type="RefSeq" id="WP_010979316.1">
    <property type="nucleotide sequence ID" value="NC_003106.2"/>
</dbReference>
<dbReference type="SMR" id="Q971T2"/>
<dbReference type="STRING" id="273063.STK_12940"/>
<dbReference type="GeneID" id="1459296"/>
<dbReference type="KEGG" id="sto:STK_12940"/>
<dbReference type="PATRIC" id="fig|273063.9.peg.1455"/>
<dbReference type="eggNOG" id="arCOG01165">
    <property type="taxonomic scope" value="Archaea"/>
</dbReference>
<dbReference type="OrthoDB" id="65493at2157"/>
<dbReference type="Proteomes" id="UP000001015">
    <property type="component" value="Chromosome"/>
</dbReference>
<dbReference type="GO" id="GO:0005524">
    <property type="term" value="F:ATP binding"/>
    <property type="evidence" value="ECO:0007669"/>
    <property type="project" value="UniProtKB-UniRule"/>
</dbReference>
<dbReference type="GO" id="GO:0003677">
    <property type="term" value="F:DNA binding"/>
    <property type="evidence" value="ECO:0007669"/>
    <property type="project" value="UniProtKB-UniRule"/>
</dbReference>
<dbReference type="GO" id="GO:0003918">
    <property type="term" value="F:DNA topoisomerase type II (double strand cut, ATP-hydrolyzing) activity"/>
    <property type="evidence" value="ECO:0007669"/>
    <property type="project" value="UniProtKB-UniRule"/>
</dbReference>
<dbReference type="GO" id="GO:0006265">
    <property type="term" value="P:DNA topological change"/>
    <property type="evidence" value="ECO:0007669"/>
    <property type="project" value="UniProtKB-UniRule"/>
</dbReference>
<dbReference type="CDD" id="cd00823">
    <property type="entry name" value="TopoIIB_Trans"/>
    <property type="match status" value="1"/>
</dbReference>
<dbReference type="FunFam" id="3.30.565.10:FF:000062">
    <property type="entry name" value="Type 2 DNA topoisomerase 6 subunit B"/>
    <property type="match status" value="1"/>
</dbReference>
<dbReference type="Gene3D" id="1.10.8.50">
    <property type="match status" value="1"/>
</dbReference>
<dbReference type="Gene3D" id="3.30.230.10">
    <property type="match status" value="1"/>
</dbReference>
<dbReference type="Gene3D" id="3.30.565.10">
    <property type="entry name" value="Histidine kinase-like ATPase, C-terminal domain"/>
    <property type="match status" value="1"/>
</dbReference>
<dbReference type="HAMAP" id="MF_00322">
    <property type="entry name" value="Top6B"/>
    <property type="match status" value="1"/>
</dbReference>
<dbReference type="InterPro" id="IPR036890">
    <property type="entry name" value="HATPase_C_sf"/>
</dbReference>
<dbReference type="InterPro" id="IPR020568">
    <property type="entry name" value="Ribosomal_Su5_D2-typ_SF"/>
</dbReference>
<dbReference type="InterPro" id="IPR010979">
    <property type="entry name" value="Ribosomal_uS13-like_H2TH"/>
</dbReference>
<dbReference type="InterPro" id="IPR014721">
    <property type="entry name" value="Ribsml_uS5_D2-typ_fold_subgr"/>
</dbReference>
<dbReference type="InterPro" id="IPR005734">
    <property type="entry name" value="TopoVI_B"/>
</dbReference>
<dbReference type="InterPro" id="IPR015320">
    <property type="entry name" value="TopoVI_B_transducer"/>
</dbReference>
<dbReference type="NCBIfam" id="NF003218">
    <property type="entry name" value="PRK04184.1"/>
    <property type="match status" value="1"/>
</dbReference>
<dbReference type="NCBIfam" id="TIGR01052">
    <property type="entry name" value="top6b"/>
    <property type="match status" value="1"/>
</dbReference>
<dbReference type="PANTHER" id="PTHR48444">
    <property type="entry name" value="DNA TOPOISOMERASE 6 SUBUNIT B"/>
    <property type="match status" value="1"/>
</dbReference>
<dbReference type="PANTHER" id="PTHR48444:SF1">
    <property type="entry name" value="DNA TOPOISOMERASE 6 SUBUNIT B"/>
    <property type="match status" value="1"/>
</dbReference>
<dbReference type="Pfam" id="PF02518">
    <property type="entry name" value="HATPase_c"/>
    <property type="match status" value="1"/>
</dbReference>
<dbReference type="Pfam" id="PF09239">
    <property type="entry name" value="Topo-VIb_trans"/>
    <property type="match status" value="1"/>
</dbReference>
<dbReference type="PIRSF" id="PIRSF006553">
    <property type="entry name" value="TopoVI_B"/>
    <property type="match status" value="1"/>
</dbReference>
<dbReference type="SMART" id="SM00387">
    <property type="entry name" value="HATPase_c"/>
    <property type="match status" value="1"/>
</dbReference>
<dbReference type="SUPFAM" id="SSF55874">
    <property type="entry name" value="ATPase domain of HSP90 chaperone/DNA topoisomerase II/histidine kinase"/>
    <property type="match status" value="1"/>
</dbReference>
<dbReference type="SUPFAM" id="SSF54211">
    <property type="entry name" value="Ribosomal protein S5 domain 2-like"/>
    <property type="match status" value="1"/>
</dbReference>
<dbReference type="SUPFAM" id="SSF46946">
    <property type="entry name" value="S13-like H2TH domain"/>
    <property type="match status" value="1"/>
</dbReference>
<reference key="1">
    <citation type="journal article" date="2001" name="DNA Res.">
        <title>Complete genome sequence of an aerobic thermoacidophilic Crenarchaeon, Sulfolobus tokodaii strain7.</title>
        <authorList>
            <person name="Kawarabayasi Y."/>
            <person name="Hino Y."/>
            <person name="Horikawa H."/>
            <person name="Jin-no K."/>
            <person name="Takahashi M."/>
            <person name="Sekine M."/>
            <person name="Baba S."/>
            <person name="Ankai A."/>
            <person name="Kosugi H."/>
            <person name="Hosoyama A."/>
            <person name="Fukui S."/>
            <person name="Nagai Y."/>
            <person name="Nishijima K."/>
            <person name="Otsuka R."/>
            <person name="Nakazawa H."/>
            <person name="Takamiya M."/>
            <person name="Kato Y."/>
            <person name="Yoshizawa T."/>
            <person name="Tanaka T."/>
            <person name="Kudoh Y."/>
            <person name="Yamazaki J."/>
            <person name="Kushida N."/>
            <person name="Oguchi A."/>
            <person name="Aoki K."/>
            <person name="Masuda S."/>
            <person name="Yanagii M."/>
            <person name="Nishimura M."/>
            <person name="Yamagishi A."/>
            <person name="Oshima T."/>
            <person name="Kikuchi H."/>
        </authorList>
    </citation>
    <scope>NUCLEOTIDE SEQUENCE [LARGE SCALE GENOMIC DNA]</scope>
    <source>
        <strain>DSM 16993 / JCM 10545 / NBRC 100140 / 7</strain>
    </source>
</reference>
<proteinExistence type="inferred from homology"/>
<evidence type="ECO:0000255" key="1">
    <source>
        <dbReference type="HAMAP-Rule" id="MF_00322"/>
    </source>
</evidence>
<gene>
    <name evidence="1" type="primary">top6B</name>
    <name type="ordered locus">STK_12940</name>
</gene>
<comment type="function">
    <text evidence="1">Relaxes both positive and negative superturns and exhibits a strong decatenase activity.</text>
</comment>
<comment type="catalytic activity">
    <reaction evidence="1">
        <text>ATP-dependent breakage, passage and rejoining of double-stranded DNA.</text>
        <dbReference type="EC" id="5.6.2.2"/>
    </reaction>
</comment>
<comment type="subunit">
    <text evidence="1">Homodimer. Heterotetramer of two Top6A and two Top6B chains.</text>
</comment>
<comment type="similarity">
    <text evidence="1">Belongs to the TOP6B family.</text>
</comment>
<protein>
    <recommendedName>
        <fullName evidence="1">Type 2 DNA topoisomerase 6 subunit B</fullName>
        <ecNumber evidence="1">5.6.2.2</ecNumber>
    </recommendedName>
    <alternativeName>
        <fullName evidence="1">Type II DNA topoisomerase VI subunit B</fullName>
        <shortName evidence="1">TopoVI-B</shortName>
    </alternativeName>
</protein>
<organism>
    <name type="scientific">Sulfurisphaera tokodaii (strain DSM 16993 / JCM 10545 / NBRC 100140 / 7)</name>
    <name type="common">Sulfolobus tokodaii</name>
    <dbReference type="NCBI Taxonomy" id="273063"/>
    <lineage>
        <taxon>Archaea</taxon>
        <taxon>Thermoproteota</taxon>
        <taxon>Thermoprotei</taxon>
        <taxon>Sulfolobales</taxon>
        <taxon>Sulfolobaceae</taxon>
        <taxon>Sulfurisphaera</taxon>
    </lineage>
</organism>
<accession>Q971T2</accession>
<feature type="chain" id="PRO_0000145472" description="Type 2 DNA topoisomerase 6 subunit B">
    <location>
        <begin position="1"/>
        <end position="532"/>
    </location>
</feature>
<feature type="binding site" evidence="1">
    <location>
        <position position="41"/>
    </location>
    <ligand>
        <name>ATP</name>
        <dbReference type="ChEBI" id="CHEBI:30616"/>
    </ligand>
</feature>
<feature type="binding site" evidence="1">
    <location>
        <position position="75"/>
    </location>
    <ligand>
        <name>ATP</name>
        <dbReference type="ChEBI" id="CHEBI:30616"/>
    </ligand>
</feature>
<feature type="binding site" evidence="1">
    <location>
        <begin position="96"/>
        <end position="97"/>
    </location>
    <ligand>
        <name>ATP</name>
        <dbReference type="ChEBI" id="CHEBI:30616"/>
    </ligand>
</feature>
<feature type="binding site" evidence="1">
    <location>
        <begin position="105"/>
        <end position="112"/>
    </location>
    <ligand>
        <name>ATP</name>
        <dbReference type="ChEBI" id="CHEBI:30616"/>
    </ligand>
</feature>
<feature type="binding site" evidence="1">
    <location>
        <position position="427"/>
    </location>
    <ligand>
        <name>ATP</name>
        <dbReference type="ChEBI" id="CHEBI:30616"/>
    </ligand>
</feature>
<keyword id="KW-0067">ATP-binding</keyword>
<keyword id="KW-0238">DNA-binding</keyword>
<keyword id="KW-0413">Isomerase</keyword>
<keyword id="KW-0547">Nucleotide-binding</keyword>
<keyword id="KW-1185">Reference proteome</keyword>
<keyword id="KW-0799">Topoisomerase</keyword>